<dbReference type="EC" id="4.1.1.85" evidence="1"/>
<dbReference type="EMBL" id="CP000038">
    <property type="protein sequence ID" value="AAZ90860.1"/>
    <property type="molecule type" value="Genomic_DNA"/>
</dbReference>
<dbReference type="RefSeq" id="WP_000056760.1">
    <property type="nucleotide sequence ID" value="NC_007384.1"/>
</dbReference>
<dbReference type="SMR" id="Q3YUF2"/>
<dbReference type="GeneID" id="75202430"/>
<dbReference type="KEGG" id="ssn:SSON_4378"/>
<dbReference type="HOGENOM" id="CLU_081825_0_0_6"/>
<dbReference type="UniPathway" id="UPA00263">
    <property type="reaction ID" value="UER00378"/>
</dbReference>
<dbReference type="Proteomes" id="UP000002529">
    <property type="component" value="Chromosome"/>
</dbReference>
<dbReference type="GO" id="GO:0033982">
    <property type="term" value="F:3-dehydro-L-gulonate-6-phosphate decarboxylase activity"/>
    <property type="evidence" value="ECO:0007669"/>
    <property type="project" value="UniProtKB-EC"/>
</dbReference>
<dbReference type="GO" id="GO:0000287">
    <property type="term" value="F:magnesium ion binding"/>
    <property type="evidence" value="ECO:0007669"/>
    <property type="project" value="UniProtKB-UniRule"/>
</dbReference>
<dbReference type="GO" id="GO:0004590">
    <property type="term" value="F:orotidine-5'-phosphate decarboxylase activity"/>
    <property type="evidence" value="ECO:0007669"/>
    <property type="project" value="InterPro"/>
</dbReference>
<dbReference type="GO" id="GO:0006207">
    <property type="term" value="P:'de novo' pyrimidine nucleobase biosynthetic process"/>
    <property type="evidence" value="ECO:0007669"/>
    <property type="project" value="InterPro"/>
</dbReference>
<dbReference type="GO" id="GO:0019854">
    <property type="term" value="P:L-ascorbic acid catabolic process"/>
    <property type="evidence" value="ECO:0007669"/>
    <property type="project" value="UniProtKB-UniRule"/>
</dbReference>
<dbReference type="CDD" id="cd04726">
    <property type="entry name" value="KGPDC_HPS"/>
    <property type="match status" value="1"/>
</dbReference>
<dbReference type="FunFam" id="3.20.20.70:FF:000022">
    <property type="entry name" value="3-keto-L-gulonate-6-phosphate decarboxylase UlaD"/>
    <property type="match status" value="1"/>
</dbReference>
<dbReference type="Gene3D" id="3.20.20.70">
    <property type="entry name" value="Aldolase class I"/>
    <property type="match status" value="1"/>
</dbReference>
<dbReference type="HAMAP" id="MF_01267">
    <property type="entry name" value="UlaD"/>
    <property type="match status" value="1"/>
</dbReference>
<dbReference type="InterPro" id="IPR023942">
    <property type="entry name" value="3-keto-L-gulonate6Pdecase_UlaD"/>
</dbReference>
<dbReference type="InterPro" id="IPR013785">
    <property type="entry name" value="Aldolase_TIM"/>
</dbReference>
<dbReference type="InterPro" id="IPR041710">
    <property type="entry name" value="HPS/KGPDC"/>
</dbReference>
<dbReference type="InterPro" id="IPR001754">
    <property type="entry name" value="OMPdeCOase_dom"/>
</dbReference>
<dbReference type="InterPro" id="IPR011060">
    <property type="entry name" value="RibuloseP-bd_barrel"/>
</dbReference>
<dbReference type="NCBIfam" id="NF009832">
    <property type="entry name" value="PRK13306.1"/>
    <property type="match status" value="1"/>
</dbReference>
<dbReference type="PANTHER" id="PTHR35039">
    <property type="entry name" value="3-KETO-L-GULONATE-6-PHOSPHATE DECARBOXYLASE SGBH-RELATED"/>
    <property type="match status" value="1"/>
</dbReference>
<dbReference type="PANTHER" id="PTHR35039:SF3">
    <property type="entry name" value="3-KETO-L-GULONATE-6-PHOSPHATE DECARBOXYLASE SGBH-RELATED"/>
    <property type="match status" value="1"/>
</dbReference>
<dbReference type="Pfam" id="PF00215">
    <property type="entry name" value="OMPdecase"/>
    <property type="match status" value="1"/>
</dbReference>
<dbReference type="SMART" id="SM00934">
    <property type="entry name" value="OMPdecase"/>
    <property type="match status" value="1"/>
</dbReference>
<dbReference type="SUPFAM" id="SSF51366">
    <property type="entry name" value="Ribulose-phoshate binding barrel"/>
    <property type="match status" value="1"/>
</dbReference>
<protein>
    <recommendedName>
        <fullName evidence="1">3-keto-L-gulonate-6-phosphate decarboxylase UlaD</fullName>
        <ecNumber evidence="1">4.1.1.85</ecNumber>
    </recommendedName>
    <alternativeName>
        <fullName evidence="1">3-dehydro-L-gulonate-6-phosphate decarboxylase</fullName>
    </alternativeName>
    <alternativeName>
        <fullName evidence="1">KGPDC</fullName>
    </alternativeName>
    <alternativeName>
        <fullName evidence="1">L-ascorbate utilization protein D</fullName>
    </alternativeName>
</protein>
<sequence>MSLPMLQVALDNQTMDSAYETTRLIAEEVDIIEVGTILCVGEGVRAVRDLKALYPHKIVLADAKIADAGKILSRMCFEANADWVTVICCADINTAKGALDVAKEFNGDVQIELTGYWTWEQAQQWRDAGIQQVVYHRSRDAQAAGVAWGEADITAIKRLSDMGFKVTVTGGLALEDLPLFKGIPIHVFIAGRSIRDAASPVEAARQFKRSIAELWG</sequence>
<name>ULAD_SHISS</name>
<gene>
    <name evidence="1" type="primary">ulaD</name>
    <name type="ordered locus">SSON_4378</name>
</gene>
<evidence type="ECO:0000255" key="1">
    <source>
        <dbReference type="HAMAP-Rule" id="MF_01267"/>
    </source>
</evidence>
<comment type="function">
    <text evidence="1">Catalyzes the decarboxylation of 3-keto-L-gulonate-6-P into L-xylulose-5-P. Is involved in the anaerobic L-ascorbate utilization.</text>
</comment>
<comment type="catalytic activity">
    <reaction evidence="1">
        <text>3-dehydro-L-gulonate 6-phosphate + H(+) = L-xylulose 5-phosphate + CO2</text>
        <dbReference type="Rhea" id="RHEA:14353"/>
        <dbReference type="ChEBI" id="CHEBI:15378"/>
        <dbReference type="ChEBI" id="CHEBI:16526"/>
        <dbReference type="ChEBI" id="CHEBI:57829"/>
        <dbReference type="ChEBI" id="CHEBI:58774"/>
        <dbReference type="EC" id="4.1.1.85"/>
    </reaction>
</comment>
<comment type="cofactor">
    <cofactor evidence="1">
        <name>Mg(2+)</name>
        <dbReference type="ChEBI" id="CHEBI:18420"/>
    </cofactor>
    <text evidence="1">Binds 1 Mg(2+) ion per subunit.</text>
</comment>
<comment type="pathway">
    <text evidence="1">Cofactor degradation; L-ascorbate degradation; D-xylulose 5-phosphate from L-ascorbate: step 2/4.</text>
</comment>
<comment type="subunit">
    <text evidence="1">Homodimer.</text>
</comment>
<comment type="induction">
    <text evidence="1">Induced by L-ascorbate. Repressed by UlaR.</text>
</comment>
<comment type="similarity">
    <text evidence="1">Belongs to the HPS/KGPDC family. KGPDC subfamily.</text>
</comment>
<organism>
    <name type="scientific">Shigella sonnei (strain Ss046)</name>
    <dbReference type="NCBI Taxonomy" id="300269"/>
    <lineage>
        <taxon>Bacteria</taxon>
        <taxon>Pseudomonadati</taxon>
        <taxon>Pseudomonadota</taxon>
        <taxon>Gammaproteobacteria</taxon>
        <taxon>Enterobacterales</taxon>
        <taxon>Enterobacteriaceae</taxon>
        <taxon>Shigella</taxon>
    </lineage>
</organism>
<feature type="chain" id="PRO_0000236098" description="3-keto-L-gulonate-6-phosphate decarboxylase UlaD">
    <location>
        <begin position="1"/>
        <end position="216"/>
    </location>
</feature>
<feature type="binding site" evidence="1">
    <location>
        <position position="11"/>
    </location>
    <ligand>
        <name>substrate</name>
    </ligand>
</feature>
<feature type="binding site" evidence="1">
    <location>
        <position position="33"/>
    </location>
    <ligand>
        <name>Mg(2+)</name>
        <dbReference type="ChEBI" id="CHEBI:18420"/>
    </ligand>
</feature>
<feature type="binding site" evidence="1">
    <location>
        <position position="62"/>
    </location>
    <ligand>
        <name>Mg(2+)</name>
        <dbReference type="ChEBI" id="CHEBI:18420"/>
    </ligand>
</feature>
<feature type="binding site" evidence="1">
    <location>
        <position position="192"/>
    </location>
    <ligand>
        <name>substrate</name>
    </ligand>
</feature>
<feature type="site" description="Transition state stabilizer" evidence="1">
    <location>
        <position position="64"/>
    </location>
</feature>
<feature type="site" description="Transition state stabilizer" evidence="1">
    <location>
        <position position="67"/>
    </location>
</feature>
<proteinExistence type="inferred from homology"/>
<reference key="1">
    <citation type="journal article" date="2005" name="Nucleic Acids Res.">
        <title>Genome dynamics and diversity of Shigella species, the etiologic agents of bacillary dysentery.</title>
        <authorList>
            <person name="Yang F."/>
            <person name="Yang J."/>
            <person name="Zhang X."/>
            <person name="Chen L."/>
            <person name="Jiang Y."/>
            <person name="Yan Y."/>
            <person name="Tang X."/>
            <person name="Wang J."/>
            <person name="Xiong Z."/>
            <person name="Dong J."/>
            <person name="Xue Y."/>
            <person name="Zhu Y."/>
            <person name="Xu X."/>
            <person name="Sun L."/>
            <person name="Chen S."/>
            <person name="Nie H."/>
            <person name="Peng J."/>
            <person name="Xu J."/>
            <person name="Wang Y."/>
            <person name="Yuan Z."/>
            <person name="Wen Y."/>
            <person name="Yao Z."/>
            <person name="Shen Y."/>
            <person name="Qiang B."/>
            <person name="Hou Y."/>
            <person name="Yu J."/>
            <person name="Jin Q."/>
        </authorList>
    </citation>
    <scope>NUCLEOTIDE SEQUENCE [LARGE SCALE GENOMIC DNA]</scope>
    <source>
        <strain>Ss046</strain>
    </source>
</reference>
<keyword id="KW-0119">Carbohydrate metabolism</keyword>
<keyword id="KW-0210">Decarboxylase</keyword>
<keyword id="KW-0456">Lyase</keyword>
<keyword id="KW-0460">Magnesium</keyword>
<keyword id="KW-0479">Metal-binding</keyword>
<keyword id="KW-1185">Reference proteome</keyword>
<accession>Q3YUF2</accession>